<reference key="1">
    <citation type="journal article" date="1996" name="DNA Res.">
        <title>Sequence analysis of the genome of the unicellular cyanobacterium Synechocystis sp. strain PCC6803. II. Sequence determination of the entire genome and assignment of potential protein-coding regions.</title>
        <authorList>
            <person name="Kaneko T."/>
            <person name="Sato S."/>
            <person name="Kotani H."/>
            <person name="Tanaka A."/>
            <person name="Asamizu E."/>
            <person name="Nakamura Y."/>
            <person name="Miyajima N."/>
            <person name="Hirosawa M."/>
            <person name="Sugiura M."/>
            <person name="Sasamoto S."/>
            <person name="Kimura T."/>
            <person name="Hosouchi T."/>
            <person name="Matsuno A."/>
            <person name="Muraki A."/>
            <person name="Nakazaki N."/>
            <person name="Naruo K."/>
            <person name="Okumura S."/>
            <person name="Shimpo S."/>
            <person name="Takeuchi C."/>
            <person name="Wada T."/>
            <person name="Watanabe A."/>
            <person name="Yamada M."/>
            <person name="Yasuda M."/>
            <person name="Tabata S."/>
        </authorList>
    </citation>
    <scope>NUCLEOTIDE SEQUENCE [LARGE SCALE GENOMIC DNA]</scope>
    <source>
        <strain>ATCC 27184 / PCC 6803 / Kazusa</strain>
    </source>
</reference>
<dbReference type="EMBL" id="BA000022">
    <property type="protein sequence ID" value="BAA17123.1"/>
    <property type="molecule type" value="Genomic_DNA"/>
</dbReference>
<dbReference type="PIR" id="S75209">
    <property type="entry name" value="S75209"/>
</dbReference>
<dbReference type="SMR" id="P73098"/>
<dbReference type="FunCoup" id="P73098">
    <property type="interactions" value="458"/>
</dbReference>
<dbReference type="STRING" id="1148.gene:10497984"/>
<dbReference type="PaxDb" id="1148-1652199"/>
<dbReference type="EnsemblBacteria" id="BAA17123">
    <property type="protein sequence ID" value="BAA17123"/>
    <property type="gene ID" value="BAA17123"/>
</dbReference>
<dbReference type="KEGG" id="syn:sll1932"/>
<dbReference type="eggNOG" id="COG0443">
    <property type="taxonomic scope" value="Bacteria"/>
</dbReference>
<dbReference type="InParanoid" id="P73098"/>
<dbReference type="PhylomeDB" id="P73098"/>
<dbReference type="Proteomes" id="UP000001425">
    <property type="component" value="Chromosome"/>
</dbReference>
<dbReference type="GO" id="GO:0005524">
    <property type="term" value="F:ATP binding"/>
    <property type="evidence" value="ECO:0007669"/>
    <property type="project" value="UniProtKB-UniRule"/>
</dbReference>
<dbReference type="GO" id="GO:0016887">
    <property type="term" value="F:ATP hydrolysis activity"/>
    <property type="evidence" value="ECO:0000318"/>
    <property type="project" value="GO_Central"/>
</dbReference>
<dbReference type="GO" id="GO:0140662">
    <property type="term" value="F:ATP-dependent protein folding chaperone"/>
    <property type="evidence" value="ECO:0007669"/>
    <property type="project" value="InterPro"/>
</dbReference>
<dbReference type="GO" id="GO:0031072">
    <property type="term" value="F:heat shock protein binding"/>
    <property type="evidence" value="ECO:0000318"/>
    <property type="project" value="GO_Central"/>
</dbReference>
<dbReference type="GO" id="GO:0044183">
    <property type="term" value="F:protein folding chaperone"/>
    <property type="evidence" value="ECO:0000318"/>
    <property type="project" value="GO_Central"/>
</dbReference>
<dbReference type="GO" id="GO:0051082">
    <property type="term" value="F:unfolded protein binding"/>
    <property type="evidence" value="ECO:0007669"/>
    <property type="project" value="InterPro"/>
</dbReference>
<dbReference type="GO" id="GO:0051085">
    <property type="term" value="P:chaperone cofactor-dependent protein refolding"/>
    <property type="evidence" value="ECO:0000318"/>
    <property type="project" value="GO_Central"/>
</dbReference>
<dbReference type="GO" id="GO:0042026">
    <property type="term" value="P:protein refolding"/>
    <property type="evidence" value="ECO:0000318"/>
    <property type="project" value="GO_Central"/>
</dbReference>
<dbReference type="CDD" id="cd10234">
    <property type="entry name" value="ASKHA_NBD_HSP70_DnaK-like"/>
    <property type="match status" value="1"/>
</dbReference>
<dbReference type="FunFam" id="2.60.34.10:FF:000014">
    <property type="entry name" value="Chaperone protein DnaK HSP70"/>
    <property type="match status" value="1"/>
</dbReference>
<dbReference type="FunFam" id="3.30.420.40:FF:000004">
    <property type="entry name" value="Molecular chaperone DnaK"/>
    <property type="match status" value="1"/>
</dbReference>
<dbReference type="FunFam" id="3.90.640.10:FF:000003">
    <property type="entry name" value="Molecular chaperone DnaK"/>
    <property type="match status" value="1"/>
</dbReference>
<dbReference type="Gene3D" id="3.30.420.40">
    <property type="match status" value="2"/>
</dbReference>
<dbReference type="Gene3D" id="3.90.640.10">
    <property type="entry name" value="Actin, Chain A, domain 4"/>
    <property type="match status" value="1"/>
</dbReference>
<dbReference type="Gene3D" id="2.60.34.10">
    <property type="entry name" value="Substrate Binding Domain Of DNAk, Chain A, domain 1"/>
    <property type="match status" value="1"/>
</dbReference>
<dbReference type="HAMAP" id="MF_00332">
    <property type="entry name" value="DnaK"/>
    <property type="match status" value="1"/>
</dbReference>
<dbReference type="InterPro" id="IPR043129">
    <property type="entry name" value="ATPase_NBD"/>
</dbReference>
<dbReference type="InterPro" id="IPR012725">
    <property type="entry name" value="Chaperone_DnaK"/>
</dbReference>
<dbReference type="InterPro" id="IPR018181">
    <property type="entry name" value="Heat_shock_70_CS"/>
</dbReference>
<dbReference type="InterPro" id="IPR029047">
    <property type="entry name" value="HSP70_peptide-bd_sf"/>
</dbReference>
<dbReference type="InterPro" id="IPR013126">
    <property type="entry name" value="Hsp_70_fam"/>
</dbReference>
<dbReference type="NCBIfam" id="NF001413">
    <property type="entry name" value="PRK00290.1"/>
    <property type="match status" value="1"/>
</dbReference>
<dbReference type="NCBIfam" id="NF009946">
    <property type="entry name" value="PRK13410.1"/>
    <property type="match status" value="1"/>
</dbReference>
<dbReference type="NCBIfam" id="TIGR02350">
    <property type="entry name" value="prok_dnaK"/>
    <property type="match status" value="1"/>
</dbReference>
<dbReference type="PANTHER" id="PTHR19375">
    <property type="entry name" value="HEAT SHOCK PROTEIN 70KDA"/>
    <property type="match status" value="1"/>
</dbReference>
<dbReference type="Pfam" id="PF00012">
    <property type="entry name" value="HSP70"/>
    <property type="match status" value="1"/>
</dbReference>
<dbReference type="PRINTS" id="PR00301">
    <property type="entry name" value="HEATSHOCK70"/>
</dbReference>
<dbReference type="SUPFAM" id="SSF53067">
    <property type="entry name" value="Actin-like ATPase domain"/>
    <property type="match status" value="2"/>
</dbReference>
<dbReference type="SUPFAM" id="SSF100920">
    <property type="entry name" value="Heat shock protein 70kD (HSP70), peptide-binding domain"/>
    <property type="match status" value="1"/>
</dbReference>
<dbReference type="PROSITE" id="PS00297">
    <property type="entry name" value="HSP70_1"/>
    <property type="match status" value="1"/>
</dbReference>
<dbReference type="PROSITE" id="PS00329">
    <property type="entry name" value="HSP70_2"/>
    <property type="match status" value="1"/>
</dbReference>
<sequence length="771" mass="86030">MGKVVGIDLGTTNSVVAVMEGGKPIVIANAEGMRTTPSVVGFNKEGELVVGQMGRRQAVLNPQNTFYGVKRFMGRRYTDLTPESKRVAYTIRRDDRDNIKVRCPRLKKDFAPEEISAMILRKLAEEASRYLGEKVTGAVITVPAYFNDSQRQATRDAGKIAGLEVLRIINEPTAASLAYGLDQGRIQKILVFDLGGGTFDVSVLEVGDGIFEVKATSGDTQLGGNDFDRRIVDWLAEKFLEAEKVDLRQDRQALQRLTEAAEKAKIELSGVGTTEINLPFITATEDGPKHLETQLSRSEFEDLCGDLVTRLQRPVKRVLKDAGLSPVQIDEVVLVGGGTRMPMVKGLVRSFIDREPNENVNPDEVVAIGAAIQAGILDGEVKDILLLDVTPLSFGLETIGGVMKKLLPRNTTIPVRKSDIFSTGENNQTVVEVHVLQGEREMASDNISLGRFKLSGIPPAPRGVPQVQVSFDIDANGILQVTARDKTTGREQSITVQGASILSEGEVNRMIQEAETFAAQDRERRERIEKRNSAKALTDQAQRRLKEVTLDFGSAFTVSYRRQVDALCSEILDSLEKDDERRLDRAQADLQDVLYELNREVRLQYDDKEEGFFEAIKKTFTGDFDDDDDYYNRRPAPRDDYRGGNDYGRYDDYNYNAPSRREAPMPRAGAGRGPSLSKDYRSTAYADWDQSRVTRQRPYQGESLGGTYDDRRSSPQDDYSRGDRQKDYDYRENAPSRSGRGGNGRYGERPAQPGRNAPLQNGWDDDDDDWF</sequence>
<gene>
    <name type="primary">dnaK3</name>
    <name type="ordered locus">sll1932</name>
</gene>
<name>DNAK3_SYNY3</name>
<feature type="chain" id="PRO_0000078570" description="Chaperone protein dnaK3">
    <location>
        <begin position="1"/>
        <end position="771"/>
    </location>
</feature>
<feature type="region of interest" description="Disordered" evidence="2">
    <location>
        <begin position="624"/>
        <end position="771"/>
    </location>
</feature>
<feature type="compositionally biased region" description="Basic and acidic residues" evidence="2">
    <location>
        <begin position="630"/>
        <end position="652"/>
    </location>
</feature>
<feature type="compositionally biased region" description="Basic and acidic residues" evidence="2">
    <location>
        <begin position="708"/>
        <end position="734"/>
    </location>
</feature>
<feature type="modified residue" description="Phosphothreonine; by autocatalysis" evidence="1">
    <location>
        <position position="198"/>
    </location>
</feature>
<organism>
    <name type="scientific">Synechocystis sp. (strain ATCC 27184 / PCC 6803 / Kazusa)</name>
    <dbReference type="NCBI Taxonomy" id="1111708"/>
    <lineage>
        <taxon>Bacteria</taxon>
        <taxon>Bacillati</taxon>
        <taxon>Cyanobacteriota</taxon>
        <taxon>Cyanophyceae</taxon>
        <taxon>Synechococcales</taxon>
        <taxon>Merismopediaceae</taxon>
        <taxon>Synechocystis</taxon>
    </lineage>
</organism>
<protein>
    <recommendedName>
        <fullName>Chaperone protein dnaK3</fullName>
    </recommendedName>
    <alternativeName>
        <fullName>HSP70-3</fullName>
    </alternativeName>
    <alternativeName>
        <fullName>Heat shock 70 kDa protein 3</fullName>
    </alternativeName>
    <alternativeName>
        <fullName>Heat shock protein 70-3</fullName>
    </alternativeName>
</protein>
<accession>P73098</accession>
<evidence type="ECO:0000250" key="1"/>
<evidence type="ECO:0000256" key="2">
    <source>
        <dbReference type="SAM" id="MobiDB-lite"/>
    </source>
</evidence>
<evidence type="ECO:0000305" key="3"/>
<proteinExistence type="inferred from homology"/>
<keyword id="KW-0067">ATP-binding</keyword>
<keyword id="KW-0143">Chaperone</keyword>
<keyword id="KW-0547">Nucleotide-binding</keyword>
<keyword id="KW-0597">Phosphoprotein</keyword>
<keyword id="KW-1185">Reference proteome</keyword>
<keyword id="KW-0346">Stress response</keyword>
<comment type="function">
    <text evidence="1">Acts as a chaperone.</text>
</comment>
<comment type="induction">
    <text evidence="1">By stress conditions e.g. heat shock (By similarity).</text>
</comment>
<comment type="similarity">
    <text evidence="3">Belongs to the heat shock protein 70 family.</text>
</comment>